<protein>
    <recommendedName>
        <fullName evidence="2">Small ribosomal subunit protein uS12cz/uS12cy</fullName>
    </recommendedName>
    <alternativeName>
        <fullName evidence="3">30S ribosomal protein S12, chloroplastic</fullName>
    </alternativeName>
</protein>
<feature type="chain" id="PRO_0000290058" description="Small ribosomal subunit protein uS12cz/uS12cy">
    <location>
        <begin position="1"/>
        <end position="124"/>
    </location>
</feature>
<reference key="1">
    <citation type="journal article" date="2004" name="Plant Physiol.">
        <title>A comparison of rice chloroplast genomes.</title>
        <authorList>
            <person name="Tang J."/>
            <person name="Xia H."/>
            <person name="Cao M."/>
            <person name="Zhang X."/>
            <person name="Zeng W."/>
            <person name="Hu S."/>
            <person name="Tong W."/>
            <person name="Wang J."/>
            <person name="Wang J."/>
            <person name="Yu J."/>
            <person name="Yang H."/>
            <person name="Zhu L."/>
        </authorList>
    </citation>
    <scope>NUCLEOTIDE SEQUENCE [LARGE SCALE GENOMIC DNA]</scope>
    <source>
        <strain>cv. PA64s</strain>
    </source>
</reference>
<name>RR12_ORYSA</name>
<proteinExistence type="inferred from homology"/>
<keyword id="KW-0150">Chloroplast</keyword>
<keyword id="KW-0934">Plastid</keyword>
<keyword id="KW-0687">Ribonucleoprotein</keyword>
<keyword id="KW-0689">Ribosomal protein</keyword>
<keyword id="KW-0694">RNA-binding</keyword>
<keyword id="KW-0699">rRNA-binding</keyword>
<dbReference type="EMBL" id="AY522331">
    <property type="status" value="NOT_ANNOTATED_CDS"/>
    <property type="molecule type" value="Genomic_DNA"/>
</dbReference>
<dbReference type="SMR" id="P0C460"/>
<dbReference type="GO" id="GO:0009507">
    <property type="term" value="C:chloroplast"/>
    <property type="evidence" value="ECO:0007669"/>
    <property type="project" value="UniProtKB-SubCell"/>
</dbReference>
<dbReference type="GO" id="GO:0009536">
    <property type="term" value="C:plastid"/>
    <property type="evidence" value="ECO:0000305"/>
    <property type="project" value="Gramene"/>
</dbReference>
<dbReference type="GO" id="GO:0015935">
    <property type="term" value="C:small ribosomal subunit"/>
    <property type="evidence" value="ECO:0007669"/>
    <property type="project" value="InterPro"/>
</dbReference>
<dbReference type="GO" id="GO:0019843">
    <property type="term" value="F:rRNA binding"/>
    <property type="evidence" value="ECO:0007669"/>
    <property type="project" value="UniProtKB-UniRule"/>
</dbReference>
<dbReference type="GO" id="GO:0003735">
    <property type="term" value="F:structural constituent of ribosome"/>
    <property type="evidence" value="ECO:0007669"/>
    <property type="project" value="InterPro"/>
</dbReference>
<dbReference type="GO" id="GO:0006412">
    <property type="term" value="P:translation"/>
    <property type="evidence" value="ECO:0007669"/>
    <property type="project" value="UniProtKB-UniRule"/>
</dbReference>
<dbReference type="CDD" id="cd03368">
    <property type="entry name" value="Ribosomal_S12"/>
    <property type="match status" value="1"/>
</dbReference>
<dbReference type="FunFam" id="2.40.50.140:FF:000008">
    <property type="entry name" value="30S ribosomal protein S12, chloroplastic"/>
    <property type="match status" value="1"/>
</dbReference>
<dbReference type="Gene3D" id="2.40.50.140">
    <property type="entry name" value="Nucleic acid-binding proteins"/>
    <property type="match status" value="1"/>
</dbReference>
<dbReference type="HAMAP" id="MF_00403_B">
    <property type="entry name" value="Ribosomal_uS12_B"/>
    <property type="match status" value="1"/>
</dbReference>
<dbReference type="InterPro" id="IPR012340">
    <property type="entry name" value="NA-bd_OB-fold"/>
</dbReference>
<dbReference type="InterPro" id="IPR006032">
    <property type="entry name" value="Ribosomal_uS12"/>
</dbReference>
<dbReference type="InterPro" id="IPR005679">
    <property type="entry name" value="Ribosomal_uS12_bac"/>
</dbReference>
<dbReference type="NCBIfam" id="TIGR00981">
    <property type="entry name" value="rpsL_bact"/>
    <property type="match status" value="1"/>
</dbReference>
<dbReference type="PANTHER" id="PTHR11652">
    <property type="entry name" value="30S RIBOSOMAL PROTEIN S12 FAMILY MEMBER"/>
    <property type="match status" value="1"/>
</dbReference>
<dbReference type="Pfam" id="PF00164">
    <property type="entry name" value="Ribosom_S12_S23"/>
    <property type="match status" value="1"/>
</dbReference>
<dbReference type="PIRSF" id="PIRSF002133">
    <property type="entry name" value="Ribosomal_S12/S23"/>
    <property type="match status" value="1"/>
</dbReference>
<dbReference type="PRINTS" id="PR01034">
    <property type="entry name" value="RIBOSOMALS12"/>
</dbReference>
<dbReference type="SUPFAM" id="SSF50249">
    <property type="entry name" value="Nucleic acid-binding proteins"/>
    <property type="match status" value="1"/>
</dbReference>
<dbReference type="PROSITE" id="PS00055">
    <property type="entry name" value="RIBOSOMAL_S12"/>
    <property type="match status" value="1"/>
</dbReference>
<accession>P0C460</accession>
<organism>
    <name type="scientific">Oryza sativa</name>
    <name type="common">Rice</name>
    <dbReference type="NCBI Taxonomy" id="4530"/>
    <lineage>
        <taxon>Eukaryota</taxon>
        <taxon>Viridiplantae</taxon>
        <taxon>Streptophyta</taxon>
        <taxon>Embryophyta</taxon>
        <taxon>Tracheophyta</taxon>
        <taxon>Spermatophyta</taxon>
        <taxon>Magnoliopsida</taxon>
        <taxon>Liliopsida</taxon>
        <taxon>Poales</taxon>
        <taxon>Poaceae</taxon>
        <taxon>BOP clade</taxon>
        <taxon>Oryzoideae</taxon>
        <taxon>Oryzeae</taxon>
        <taxon>Oryzinae</taxon>
        <taxon>Oryza</taxon>
    </lineage>
</organism>
<evidence type="ECO:0000250" key="1"/>
<evidence type="ECO:0000255" key="2">
    <source>
        <dbReference type="HAMAP-Rule" id="MF_00403"/>
    </source>
</evidence>
<evidence type="ECO:0000305" key="3"/>
<sequence length="124" mass="13820">MPTVKQLIRNARQPIRNARKSAALKGCPQRRGTCARVYTINPKKPNSALRKVARVRLTSGFEITAYIPGIGHNLQEHSVVLVRGGRVKDLPGVRYRIIRGALDAVAVKNRQQGRSKYGVKKPKK</sequence>
<comment type="function">
    <text evidence="1">With S4 and S5 plays an important role in translational accuracy. Located at the interface of the 30S and 50S subunits (By similarity).</text>
</comment>
<comment type="subunit">
    <text evidence="1">Part of the 30S ribosomal subunit.</text>
</comment>
<comment type="subcellular location">
    <subcellularLocation>
        <location>Plastid</location>
        <location>Chloroplast</location>
    </subcellularLocation>
</comment>
<comment type="similarity">
    <text evidence="3">Belongs to the universal ribosomal protein uS12 family.</text>
</comment>
<geneLocation type="chloroplast"/>
<gene>
    <name type="primary">rps12-A</name>
</gene>
<gene>
    <name type="primary">rps12-B</name>
</gene>